<feature type="chain" id="PRO_0000242169" description="Peptide chain release factor 3">
    <location>
        <begin position="1"/>
        <end position="548"/>
    </location>
</feature>
<feature type="domain" description="tr-type G">
    <location>
        <begin position="23"/>
        <end position="290"/>
    </location>
</feature>
<feature type="binding site" evidence="1">
    <location>
        <begin position="32"/>
        <end position="39"/>
    </location>
    <ligand>
        <name>GTP</name>
        <dbReference type="ChEBI" id="CHEBI:37565"/>
    </ligand>
</feature>
<feature type="binding site" evidence="1">
    <location>
        <begin position="100"/>
        <end position="104"/>
    </location>
    <ligand>
        <name>GTP</name>
        <dbReference type="ChEBI" id="CHEBI:37565"/>
    </ligand>
</feature>
<feature type="binding site" evidence="1">
    <location>
        <begin position="154"/>
        <end position="157"/>
    </location>
    <ligand>
        <name>GTP</name>
        <dbReference type="ChEBI" id="CHEBI:37565"/>
    </ligand>
</feature>
<proteinExistence type="inferred from homology"/>
<name>RF3_AROAE</name>
<gene>
    <name evidence="1" type="primary">prfC</name>
    <name type="ordered locus">AZOSEA18290</name>
    <name type="ORF">ebA3251</name>
</gene>
<sequence length="548" mass="61117">MADIPAATPSATPFPPELLRDVERRRTFGIISHPDAGKTTLTEKLLLFGGAIQLAGTVKARKSARHATSDWMEVEKQRGISVSSSVMQFEYAGHTINLLDTPGHQDFSEDTYRVLTAVDAAVMVIDAAKGVETQTIKLLEVCRLRNTPIITFINKMDREVRESFDLLQEIEEVLKIDCAPITWPIGMGKTFRGVYHLLEDRVLRFTPGEEKRSEAEVIKGIANAQLDELFPLEVGKLREEVDLIQGASNPFSLGDFLAGKQTPVFFGSGINNFGVQEILQALLDWAPPPQPRVAGVTVADTRLVMPAEAPFSGFVFKIQANMDPKHRDRIAFFRICSGRYSSGMKVKHVRMGREMKLANALTFMANERVLMEDGVAGDIIGIHNHGQLHIGDTLTEGENLGYKGIPYFSPELFSAARLRDPLKSKQLQKGLQELGEEGAIQVFEQEGGNMLLGAVGQLQFEVVAQRLKDEYKVDAIFESADIYTARWLVFPDEVTRRNFEREQGIRVGKDVDGNPVYLATSRYNLEVTMEKWPKVGFHATREHGEKLS</sequence>
<evidence type="ECO:0000255" key="1">
    <source>
        <dbReference type="HAMAP-Rule" id="MF_00072"/>
    </source>
</evidence>
<comment type="function">
    <text evidence="1">Increases the formation of ribosomal termination complexes and stimulates activities of RF-1 and RF-2. It binds guanine nucleotides and has strong preference for UGA stop codons. It may interact directly with the ribosome. The stimulation of RF-1 and RF-2 is significantly reduced by GTP and GDP, but not by GMP.</text>
</comment>
<comment type="subcellular location">
    <subcellularLocation>
        <location evidence="1">Cytoplasm</location>
    </subcellularLocation>
</comment>
<comment type="similarity">
    <text evidence="1">Belongs to the TRAFAC class translation factor GTPase superfamily. Classic translation factor GTPase family. PrfC subfamily.</text>
</comment>
<organism>
    <name type="scientific">Aromatoleum aromaticum (strain DSM 19018 / LMG 30748 / EbN1)</name>
    <name type="common">Azoarcus sp. (strain EbN1)</name>
    <dbReference type="NCBI Taxonomy" id="76114"/>
    <lineage>
        <taxon>Bacteria</taxon>
        <taxon>Pseudomonadati</taxon>
        <taxon>Pseudomonadota</taxon>
        <taxon>Betaproteobacteria</taxon>
        <taxon>Rhodocyclales</taxon>
        <taxon>Rhodocyclaceae</taxon>
        <taxon>Aromatoleum</taxon>
    </lineage>
</organism>
<protein>
    <recommendedName>
        <fullName evidence="1">Peptide chain release factor 3</fullName>
        <shortName evidence="1">RF-3</shortName>
    </recommendedName>
</protein>
<dbReference type="EMBL" id="CR555306">
    <property type="protein sequence ID" value="CAI07954.1"/>
    <property type="molecule type" value="Genomic_DNA"/>
</dbReference>
<dbReference type="RefSeq" id="WP_011237663.1">
    <property type="nucleotide sequence ID" value="NC_006513.1"/>
</dbReference>
<dbReference type="SMR" id="Q5P409"/>
<dbReference type="STRING" id="76114.ebA3251"/>
<dbReference type="KEGG" id="eba:ebA3251"/>
<dbReference type="eggNOG" id="COG4108">
    <property type="taxonomic scope" value="Bacteria"/>
</dbReference>
<dbReference type="HOGENOM" id="CLU_002794_2_1_4"/>
<dbReference type="OrthoDB" id="9804431at2"/>
<dbReference type="Proteomes" id="UP000006552">
    <property type="component" value="Chromosome"/>
</dbReference>
<dbReference type="GO" id="GO:0005829">
    <property type="term" value="C:cytosol"/>
    <property type="evidence" value="ECO:0007669"/>
    <property type="project" value="TreeGrafter"/>
</dbReference>
<dbReference type="GO" id="GO:0005525">
    <property type="term" value="F:GTP binding"/>
    <property type="evidence" value="ECO:0007669"/>
    <property type="project" value="UniProtKB-UniRule"/>
</dbReference>
<dbReference type="GO" id="GO:0003924">
    <property type="term" value="F:GTPase activity"/>
    <property type="evidence" value="ECO:0007669"/>
    <property type="project" value="InterPro"/>
</dbReference>
<dbReference type="GO" id="GO:0016150">
    <property type="term" value="F:translation release factor activity, codon nonspecific"/>
    <property type="evidence" value="ECO:0007669"/>
    <property type="project" value="TreeGrafter"/>
</dbReference>
<dbReference type="GO" id="GO:0016149">
    <property type="term" value="F:translation release factor activity, codon specific"/>
    <property type="evidence" value="ECO:0007669"/>
    <property type="project" value="UniProtKB-UniRule"/>
</dbReference>
<dbReference type="GO" id="GO:0006449">
    <property type="term" value="P:regulation of translational termination"/>
    <property type="evidence" value="ECO:0007669"/>
    <property type="project" value="UniProtKB-UniRule"/>
</dbReference>
<dbReference type="CDD" id="cd04169">
    <property type="entry name" value="RF3"/>
    <property type="match status" value="1"/>
</dbReference>
<dbReference type="FunFam" id="3.30.70.3280:FF:000001">
    <property type="entry name" value="Peptide chain release factor 3"/>
    <property type="match status" value="1"/>
</dbReference>
<dbReference type="FunFam" id="3.40.50.300:FF:000542">
    <property type="entry name" value="Peptide chain release factor 3"/>
    <property type="match status" value="1"/>
</dbReference>
<dbReference type="Gene3D" id="3.40.50.300">
    <property type="entry name" value="P-loop containing nucleotide triphosphate hydrolases"/>
    <property type="match status" value="1"/>
</dbReference>
<dbReference type="Gene3D" id="3.30.70.3280">
    <property type="entry name" value="Peptide chain release factor 3, domain III"/>
    <property type="match status" value="1"/>
</dbReference>
<dbReference type="Gene3D" id="2.40.30.10">
    <property type="entry name" value="Translation factors"/>
    <property type="match status" value="1"/>
</dbReference>
<dbReference type="HAMAP" id="MF_00072">
    <property type="entry name" value="Rel_fac_3"/>
    <property type="match status" value="1"/>
</dbReference>
<dbReference type="InterPro" id="IPR053905">
    <property type="entry name" value="EF-G-like_DII"/>
</dbReference>
<dbReference type="InterPro" id="IPR035647">
    <property type="entry name" value="EFG_III/V"/>
</dbReference>
<dbReference type="InterPro" id="IPR031157">
    <property type="entry name" value="G_TR_CS"/>
</dbReference>
<dbReference type="InterPro" id="IPR027417">
    <property type="entry name" value="P-loop_NTPase"/>
</dbReference>
<dbReference type="InterPro" id="IPR004548">
    <property type="entry name" value="PrfC"/>
</dbReference>
<dbReference type="InterPro" id="IPR032090">
    <property type="entry name" value="RF3_C"/>
</dbReference>
<dbReference type="InterPro" id="IPR038467">
    <property type="entry name" value="RF3_dom_3_sf"/>
</dbReference>
<dbReference type="InterPro" id="IPR041732">
    <property type="entry name" value="RF3_GTP-bd"/>
</dbReference>
<dbReference type="InterPro" id="IPR005225">
    <property type="entry name" value="Small_GTP-bd"/>
</dbReference>
<dbReference type="InterPro" id="IPR000795">
    <property type="entry name" value="T_Tr_GTP-bd_dom"/>
</dbReference>
<dbReference type="InterPro" id="IPR009000">
    <property type="entry name" value="Transl_B-barrel_sf"/>
</dbReference>
<dbReference type="NCBIfam" id="TIGR00503">
    <property type="entry name" value="prfC"/>
    <property type="match status" value="1"/>
</dbReference>
<dbReference type="NCBIfam" id="NF001964">
    <property type="entry name" value="PRK00741.1"/>
    <property type="match status" value="1"/>
</dbReference>
<dbReference type="NCBIfam" id="TIGR00231">
    <property type="entry name" value="small_GTP"/>
    <property type="match status" value="1"/>
</dbReference>
<dbReference type="PANTHER" id="PTHR43556">
    <property type="entry name" value="PEPTIDE CHAIN RELEASE FACTOR RF3"/>
    <property type="match status" value="1"/>
</dbReference>
<dbReference type="PANTHER" id="PTHR43556:SF2">
    <property type="entry name" value="PEPTIDE CHAIN RELEASE FACTOR RF3"/>
    <property type="match status" value="1"/>
</dbReference>
<dbReference type="Pfam" id="PF22042">
    <property type="entry name" value="EF-G_D2"/>
    <property type="match status" value="1"/>
</dbReference>
<dbReference type="Pfam" id="PF00009">
    <property type="entry name" value="GTP_EFTU"/>
    <property type="match status" value="1"/>
</dbReference>
<dbReference type="Pfam" id="PF16658">
    <property type="entry name" value="RF3_C"/>
    <property type="match status" value="1"/>
</dbReference>
<dbReference type="PRINTS" id="PR00315">
    <property type="entry name" value="ELONGATNFCT"/>
</dbReference>
<dbReference type="SUPFAM" id="SSF54980">
    <property type="entry name" value="EF-G C-terminal domain-like"/>
    <property type="match status" value="1"/>
</dbReference>
<dbReference type="SUPFAM" id="SSF52540">
    <property type="entry name" value="P-loop containing nucleoside triphosphate hydrolases"/>
    <property type="match status" value="1"/>
</dbReference>
<dbReference type="SUPFAM" id="SSF50447">
    <property type="entry name" value="Translation proteins"/>
    <property type="match status" value="1"/>
</dbReference>
<dbReference type="PROSITE" id="PS00301">
    <property type="entry name" value="G_TR_1"/>
    <property type="match status" value="1"/>
</dbReference>
<dbReference type="PROSITE" id="PS51722">
    <property type="entry name" value="G_TR_2"/>
    <property type="match status" value="1"/>
</dbReference>
<accession>Q5P409</accession>
<reference key="1">
    <citation type="journal article" date="2005" name="Arch. Microbiol.">
        <title>The genome sequence of an anaerobic aromatic-degrading denitrifying bacterium, strain EbN1.</title>
        <authorList>
            <person name="Rabus R."/>
            <person name="Kube M."/>
            <person name="Heider J."/>
            <person name="Beck A."/>
            <person name="Heitmann K."/>
            <person name="Widdel F."/>
            <person name="Reinhardt R."/>
        </authorList>
    </citation>
    <scope>NUCLEOTIDE SEQUENCE [LARGE SCALE GENOMIC DNA]</scope>
    <source>
        <strain>DSM 19018 / LMG 30748 / EbN1</strain>
    </source>
</reference>
<keyword id="KW-0963">Cytoplasm</keyword>
<keyword id="KW-0342">GTP-binding</keyword>
<keyword id="KW-0547">Nucleotide-binding</keyword>
<keyword id="KW-0648">Protein biosynthesis</keyword>
<keyword id="KW-1185">Reference proteome</keyword>